<feature type="chain" id="PRO_0000228192" description="Translation initiation factor IF-2">
    <location>
        <begin position="1"/>
        <end position="984"/>
    </location>
</feature>
<feature type="domain" description="tr-type G">
    <location>
        <begin position="482"/>
        <end position="651"/>
    </location>
</feature>
<feature type="region of interest" description="Disordered" evidence="3">
    <location>
        <begin position="32"/>
        <end position="402"/>
    </location>
</feature>
<feature type="region of interest" description="G1" evidence="1">
    <location>
        <begin position="491"/>
        <end position="498"/>
    </location>
</feature>
<feature type="region of interest" description="G2" evidence="1">
    <location>
        <begin position="516"/>
        <end position="520"/>
    </location>
</feature>
<feature type="region of interest" description="G3" evidence="1">
    <location>
        <begin position="537"/>
        <end position="540"/>
    </location>
</feature>
<feature type="region of interest" description="G4" evidence="1">
    <location>
        <begin position="591"/>
        <end position="594"/>
    </location>
</feature>
<feature type="region of interest" description="G5" evidence="1">
    <location>
        <begin position="627"/>
        <end position="629"/>
    </location>
</feature>
<feature type="compositionally biased region" description="Low complexity" evidence="3">
    <location>
        <begin position="89"/>
        <end position="123"/>
    </location>
</feature>
<feature type="compositionally biased region" description="Basic and acidic residues" evidence="3">
    <location>
        <begin position="126"/>
        <end position="136"/>
    </location>
</feature>
<feature type="compositionally biased region" description="Low complexity" evidence="3">
    <location>
        <begin position="154"/>
        <end position="172"/>
    </location>
</feature>
<feature type="compositionally biased region" description="Low complexity" evidence="3">
    <location>
        <begin position="187"/>
        <end position="197"/>
    </location>
</feature>
<feature type="compositionally biased region" description="Basic and acidic residues" evidence="3">
    <location>
        <begin position="198"/>
        <end position="220"/>
    </location>
</feature>
<feature type="compositionally biased region" description="Low complexity" evidence="3">
    <location>
        <begin position="255"/>
        <end position="270"/>
    </location>
</feature>
<feature type="compositionally biased region" description="Basic and acidic residues" evidence="3">
    <location>
        <begin position="271"/>
        <end position="283"/>
    </location>
</feature>
<feature type="compositionally biased region" description="Low complexity" evidence="3">
    <location>
        <begin position="308"/>
        <end position="334"/>
    </location>
</feature>
<feature type="binding site" evidence="2">
    <location>
        <begin position="491"/>
        <end position="498"/>
    </location>
    <ligand>
        <name>GTP</name>
        <dbReference type="ChEBI" id="CHEBI:37565"/>
    </ligand>
</feature>
<feature type="binding site" evidence="2">
    <location>
        <begin position="537"/>
        <end position="541"/>
    </location>
    <ligand>
        <name>GTP</name>
        <dbReference type="ChEBI" id="CHEBI:37565"/>
    </ligand>
</feature>
<feature type="binding site" evidence="2">
    <location>
        <begin position="591"/>
        <end position="594"/>
    </location>
    <ligand>
        <name>GTP</name>
        <dbReference type="ChEBI" id="CHEBI:37565"/>
    </ligand>
</feature>
<accession>Q30WJ0</accession>
<proteinExistence type="inferred from homology"/>
<dbReference type="EMBL" id="CP000112">
    <property type="protein sequence ID" value="ABB39956.1"/>
    <property type="molecule type" value="Genomic_DNA"/>
</dbReference>
<dbReference type="RefSeq" id="WP_011368911.1">
    <property type="nucleotide sequence ID" value="NC_007519.1"/>
</dbReference>
<dbReference type="SMR" id="Q30WJ0"/>
<dbReference type="STRING" id="207559.Dde_3162"/>
<dbReference type="KEGG" id="dde:Dde_3162"/>
<dbReference type="eggNOG" id="COG0532">
    <property type="taxonomic scope" value="Bacteria"/>
</dbReference>
<dbReference type="HOGENOM" id="CLU_006301_5_1_7"/>
<dbReference type="Proteomes" id="UP000002710">
    <property type="component" value="Chromosome"/>
</dbReference>
<dbReference type="GO" id="GO:0005829">
    <property type="term" value="C:cytosol"/>
    <property type="evidence" value="ECO:0007669"/>
    <property type="project" value="TreeGrafter"/>
</dbReference>
<dbReference type="GO" id="GO:0005525">
    <property type="term" value="F:GTP binding"/>
    <property type="evidence" value="ECO:0007669"/>
    <property type="project" value="UniProtKB-KW"/>
</dbReference>
<dbReference type="GO" id="GO:0003924">
    <property type="term" value="F:GTPase activity"/>
    <property type="evidence" value="ECO:0007669"/>
    <property type="project" value="UniProtKB-UniRule"/>
</dbReference>
<dbReference type="GO" id="GO:0003743">
    <property type="term" value="F:translation initiation factor activity"/>
    <property type="evidence" value="ECO:0007669"/>
    <property type="project" value="UniProtKB-UniRule"/>
</dbReference>
<dbReference type="CDD" id="cd01887">
    <property type="entry name" value="IF2_eIF5B"/>
    <property type="match status" value="1"/>
</dbReference>
<dbReference type="CDD" id="cd03702">
    <property type="entry name" value="IF2_mtIF2_II"/>
    <property type="match status" value="1"/>
</dbReference>
<dbReference type="CDD" id="cd03692">
    <property type="entry name" value="mtIF2_IVc"/>
    <property type="match status" value="1"/>
</dbReference>
<dbReference type="FunFam" id="2.40.30.10:FF:000008">
    <property type="entry name" value="Translation initiation factor IF-2"/>
    <property type="match status" value="1"/>
</dbReference>
<dbReference type="FunFam" id="2.40.30.10:FF:000054">
    <property type="entry name" value="Translation initiation factor IF-2"/>
    <property type="match status" value="1"/>
</dbReference>
<dbReference type="FunFam" id="3.40.50.10050:FF:000001">
    <property type="entry name" value="Translation initiation factor IF-2"/>
    <property type="match status" value="1"/>
</dbReference>
<dbReference type="FunFam" id="3.40.50.300:FF:000019">
    <property type="entry name" value="Translation initiation factor IF-2"/>
    <property type="match status" value="1"/>
</dbReference>
<dbReference type="Gene3D" id="1.10.10.2480">
    <property type="match status" value="1"/>
</dbReference>
<dbReference type="Gene3D" id="3.40.50.300">
    <property type="entry name" value="P-loop containing nucleotide triphosphate hydrolases"/>
    <property type="match status" value="1"/>
</dbReference>
<dbReference type="Gene3D" id="2.40.30.10">
    <property type="entry name" value="Translation factors"/>
    <property type="match status" value="2"/>
</dbReference>
<dbReference type="Gene3D" id="3.40.50.10050">
    <property type="entry name" value="Translation initiation factor IF- 2, domain 3"/>
    <property type="match status" value="1"/>
</dbReference>
<dbReference type="HAMAP" id="MF_00100_B">
    <property type="entry name" value="IF_2_B"/>
    <property type="match status" value="1"/>
</dbReference>
<dbReference type="InterPro" id="IPR053905">
    <property type="entry name" value="EF-G-like_DII"/>
</dbReference>
<dbReference type="InterPro" id="IPR004161">
    <property type="entry name" value="EFTu-like_2"/>
</dbReference>
<dbReference type="InterPro" id="IPR044145">
    <property type="entry name" value="IF2_II"/>
</dbReference>
<dbReference type="InterPro" id="IPR006847">
    <property type="entry name" value="IF2_N"/>
</dbReference>
<dbReference type="InterPro" id="IPR027417">
    <property type="entry name" value="P-loop_NTPase"/>
</dbReference>
<dbReference type="InterPro" id="IPR005225">
    <property type="entry name" value="Small_GTP-bd"/>
</dbReference>
<dbReference type="InterPro" id="IPR000795">
    <property type="entry name" value="T_Tr_GTP-bd_dom"/>
</dbReference>
<dbReference type="InterPro" id="IPR000178">
    <property type="entry name" value="TF_IF2_bacterial-like"/>
</dbReference>
<dbReference type="InterPro" id="IPR015760">
    <property type="entry name" value="TIF_IF2"/>
</dbReference>
<dbReference type="InterPro" id="IPR023115">
    <property type="entry name" value="TIF_IF2_dom3"/>
</dbReference>
<dbReference type="InterPro" id="IPR036925">
    <property type="entry name" value="TIF_IF2_dom3_sf"/>
</dbReference>
<dbReference type="InterPro" id="IPR009000">
    <property type="entry name" value="Transl_B-barrel_sf"/>
</dbReference>
<dbReference type="NCBIfam" id="TIGR00487">
    <property type="entry name" value="IF-2"/>
    <property type="match status" value="1"/>
</dbReference>
<dbReference type="NCBIfam" id="TIGR00231">
    <property type="entry name" value="small_GTP"/>
    <property type="match status" value="1"/>
</dbReference>
<dbReference type="PANTHER" id="PTHR43381:SF5">
    <property type="entry name" value="TR-TYPE G DOMAIN-CONTAINING PROTEIN"/>
    <property type="match status" value="1"/>
</dbReference>
<dbReference type="PANTHER" id="PTHR43381">
    <property type="entry name" value="TRANSLATION INITIATION FACTOR IF-2-RELATED"/>
    <property type="match status" value="1"/>
</dbReference>
<dbReference type="Pfam" id="PF22042">
    <property type="entry name" value="EF-G_D2"/>
    <property type="match status" value="1"/>
</dbReference>
<dbReference type="Pfam" id="PF00009">
    <property type="entry name" value="GTP_EFTU"/>
    <property type="match status" value="1"/>
</dbReference>
<dbReference type="Pfam" id="PF03144">
    <property type="entry name" value="GTP_EFTU_D2"/>
    <property type="match status" value="1"/>
</dbReference>
<dbReference type="Pfam" id="PF11987">
    <property type="entry name" value="IF-2"/>
    <property type="match status" value="1"/>
</dbReference>
<dbReference type="Pfam" id="PF04760">
    <property type="entry name" value="IF2_N"/>
    <property type="match status" value="2"/>
</dbReference>
<dbReference type="SUPFAM" id="SSF52156">
    <property type="entry name" value="Initiation factor IF2/eIF5b, domain 3"/>
    <property type="match status" value="1"/>
</dbReference>
<dbReference type="SUPFAM" id="SSF52540">
    <property type="entry name" value="P-loop containing nucleoside triphosphate hydrolases"/>
    <property type="match status" value="1"/>
</dbReference>
<dbReference type="SUPFAM" id="SSF50447">
    <property type="entry name" value="Translation proteins"/>
    <property type="match status" value="2"/>
</dbReference>
<dbReference type="PROSITE" id="PS51722">
    <property type="entry name" value="G_TR_2"/>
    <property type="match status" value="1"/>
</dbReference>
<dbReference type="PROSITE" id="PS01176">
    <property type="entry name" value="IF2"/>
    <property type="match status" value="1"/>
</dbReference>
<evidence type="ECO:0000250" key="1"/>
<evidence type="ECO:0000255" key="2">
    <source>
        <dbReference type="HAMAP-Rule" id="MF_00100"/>
    </source>
</evidence>
<evidence type="ECO:0000256" key="3">
    <source>
        <dbReference type="SAM" id="MobiDB-lite"/>
    </source>
</evidence>
<protein>
    <recommendedName>
        <fullName evidence="2">Translation initiation factor IF-2</fullName>
    </recommendedName>
</protein>
<reference key="1">
    <citation type="journal article" date="2011" name="J. Bacteriol.">
        <title>Complete genome sequence and updated annotation of Desulfovibrio alaskensis G20.</title>
        <authorList>
            <person name="Hauser L.J."/>
            <person name="Land M.L."/>
            <person name="Brown S.D."/>
            <person name="Larimer F."/>
            <person name="Keller K.L."/>
            <person name="Rapp-Giles B.J."/>
            <person name="Price M.N."/>
            <person name="Lin M."/>
            <person name="Bruce D.C."/>
            <person name="Detter J.C."/>
            <person name="Tapia R."/>
            <person name="Han C.S."/>
            <person name="Goodwin L.A."/>
            <person name="Cheng J.F."/>
            <person name="Pitluck S."/>
            <person name="Copeland A."/>
            <person name="Lucas S."/>
            <person name="Nolan M."/>
            <person name="Lapidus A.L."/>
            <person name="Palumbo A.V."/>
            <person name="Wall J.D."/>
        </authorList>
    </citation>
    <scope>NUCLEOTIDE SEQUENCE [LARGE SCALE GENOMIC DNA]</scope>
    <source>
        <strain>ATCC BAA-1058 / DSM 17464 / G20</strain>
    </source>
</reference>
<keyword id="KW-0963">Cytoplasm</keyword>
<keyword id="KW-0342">GTP-binding</keyword>
<keyword id="KW-0396">Initiation factor</keyword>
<keyword id="KW-0547">Nucleotide-binding</keyword>
<keyword id="KW-0648">Protein biosynthesis</keyword>
<keyword id="KW-1185">Reference proteome</keyword>
<comment type="function">
    <text evidence="2">One of the essential components for the initiation of protein synthesis. Protects formylmethionyl-tRNA from spontaneous hydrolysis and promotes its binding to the 30S ribosomal subunits. Also involved in the hydrolysis of GTP during the formation of the 70S ribosomal complex.</text>
</comment>
<comment type="subcellular location">
    <subcellularLocation>
        <location evidence="2">Cytoplasm</location>
    </subcellularLocation>
</comment>
<comment type="similarity">
    <text evidence="2">Belongs to the TRAFAC class translation factor GTPase superfamily. Classic translation factor GTPase family. IF-2 subfamily.</text>
</comment>
<gene>
    <name evidence="2" type="primary">infB</name>
    <name type="ordered locus">Dde_3162</name>
</gene>
<sequence>MSETKIKIKDLATELNIAPKEVLAAAKKLDIPAKNATSTLTTEEARKVRGQVQEASGDARRKDGASDVIIRRRRKGSGAKPAAREEAAPAETEAQASPAQPEAKAAAPAAEAEEAPAAKPAPAKARKAEARTEAPRARIIRPATPQAEEKAEPAPETAAPAQPAPEAQSAAPEKVEAHDAGAPVQQAETTESAPAEPAAEKAPAEKRRYEVSMEPEKDSVQADTEADGDADGGRKKKKKKKREETAGPQVRVISRPDPAAVQAQAAAAAQAREERAERPDRGPRPAGARPAGPRPGGPRQGDSRPGDGRPAPRSGAPRPGGARPAAGFGQPAQAENSSPFADGQSKKKRQKGRRTVEFGDKGAGGKKMREDVGGNWNRGKKGKRKPETKPVSTQPQRAAKRKIKVDEAIRVSDFAHQMGVKAPEIIKILMSLGIMATINQSLDIDTATVVAAEFGYEVEKVGFSEDEFLLPKEVDADELLLPRPPVVTIMGHVDHGKTSLLDAIRKSSVTTGEAGGITQHIGAYHVSTKRGDIVFLDTPGHEAFTAMRARGAQVTDLVILVVAADDGVMEQTREAISHAKAAGVPIVVAVNKIDKEGANRDRVMRELAEQDLVPEEWGGDTIFSYVSAKTREGLDDLLEMLALQAEVLELKANPDKPARGRIVEAKLDKGRGAVGTVLIQEGTLKHGDAFVCGVFSGRVRAMFNDQGKKAKQAGPSIPVEVQGFEGVPVAGEEFICVKDEKVARRIAEQRAIKQRERDLARESKVTLETFLARRKTDAETQTLNLVLKADVQGSVGAITDALRKMQTEKVKVDIIHSGAGAITESDILLASASDAIIIGFNVRPTAKVKDVAEQEKVEIRFYDIIYKLSEEIKSAMAGLLAPVVREQYLGQAEVRETFSVPKVGTVAGCHVADGKIIRNTKVRLLRDGVVIYTGRINSLKRFKDDVKEVAKGFECGMGLENYNDIKIGDIIEAFEEVEEAATLD</sequence>
<name>IF2_OLEA2</name>
<organism>
    <name type="scientific">Oleidesulfovibrio alaskensis (strain ATCC BAA-1058 / DSM 17464 / G20)</name>
    <name type="common">Desulfovibrio alaskensis</name>
    <dbReference type="NCBI Taxonomy" id="207559"/>
    <lineage>
        <taxon>Bacteria</taxon>
        <taxon>Pseudomonadati</taxon>
        <taxon>Thermodesulfobacteriota</taxon>
        <taxon>Desulfovibrionia</taxon>
        <taxon>Desulfovibrionales</taxon>
        <taxon>Desulfovibrionaceae</taxon>
        <taxon>Oleidesulfovibrio</taxon>
    </lineage>
</organism>